<name>RLMD_CUPPJ</name>
<keyword id="KW-0004">4Fe-4S</keyword>
<keyword id="KW-0408">Iron</keyword>
<keyword id="KW-0411">Iron-sulfur</keyword>
<keyword id="KW-0479">Metal-binding</keyword>
<keyword id="KW-0489">Methyltransferase</keyword>
<keyword id="KW-0698">rRNA processing</keyword>
<keyword id="KW-0949">S-adenosyl-L-methionine</keyword>
<keyword id="KW-0808">Transferase</keyword>
<dbReference type="EC" id="2.1.1.190" evidence="1"/>
<dbReference type="EMBL" id="CP000090">
    <property type="protein sequence ID" value="AAZ61456.1"/>
    <property type="molecule type" value="Genomic_DNA"/>
</dbReference>
<dbReference type="SMR" id="Q46ZH7"/>
<dbReference type="STRING" id="264198.Reut_A2092"/>
<dbReference type="KEGG" id="reu:Reut_A2092"/>
<dbReference type="eggNOG" id="COG2265">
    <property type="taxonomic scope" value="Bacteria"/>
</dbReference>
<dbReference type="HOGENOM" id="CLU_014689_8_2_4"/>
<dbReference type="GO" id="GO:0051539">
    <property type="term" value="F:4 iron, 4 sulfur cluster binding"/>
    <property type="evidence" value="ECO:0007669"/>
    <property type="project" value="UniProtKB-KW"/>
</dbReference>
<dbReference type="GO" id="GO:0005506">
    <property type="term" value="F:iron ion binding"/>
    <property type="evidence" value="ECO:0007669"/>
    <property type="project" value="UniProtKB-UniRule"/>
</dbReference>
<dbReference type="GO" id="GO:0003723">
    <property type="term" value="F:RNA binding"/>
    <property type="evidence" value="ECO:0007669"/>
    <property type="project" value="InterPro"/>
</dbReference>
<dbReference type="GO" id="GO:0070041">
    <property type="term" value="F:rRNA (uridine-C5-)-methyltransferase activity"/>
    <property type="evidence" value="ECO:0007669"/>
    <property type="project" value="UniProtKB-UniRule"/>
</dbReference>
<dbReference type="GO" id="GO:0070475">
    <property type="term" value="P:rRNA base methylation"/>
    <property type="evidence" value="ECO:0007669"/>
    <property type="project" value="TreeGrafter"/>
</dbReference>
<dbReference type="CDD" id="cd02440">
    <property type="entry name" value="AdoMet_MTases"/>
    <property type="match status" value="1"/>
</dbReference>
<dbReference type="Gene3D" id="2.40.50.1070">
    <property type="match status" value="1"/>
</dbReference>
<dbReference type="Gene3D" id="2.40.50.140">
    <property type="entry name" value="Nucleic acid-binding proteins"/>
    <property type="match status" value="1"/>
</dbReference>
<dbReference type="Gene3D" id="3.40.50.150">
    <property type="entry name" value="Vaccinia Virus protein VP39"/>
    <property type="match status" value="1"/>
</dbReference>
<dbReference type="HAMAP" id="MF_01010">
    <property type="entry name" value="23SrRNA_methyltr_RlmD"/>
    <property type="match status" value="1"/>
</dbReference>
<dbReference type="InterPro" id="IPR001566">
    <property type="entry name" value="23S_rRNA_MeTrfase_RlmD"/>
</dbReference>
<dbReference type="InterPro" id="IPR030391">
    <property type="entry name" value="MeTrfase_TrmA_CS"/>
</dbReference>
<dbReference type="InterPro" id="IPR012340">
    <property type="entry name" value="NA-bd_OB-fold"/>
</dbReference>
<dbReference type="InterPro" id="IPR029063">
    <property type="entry name" value="SAM-dependent_MTases_sf"/>
</dbReference>
<dbReference type="InterPro" id="IPR002792">
    <property type="entry name" value="TRAM_dom"/>
</dbReference>
<dbReference type="InterPro" id="IPR010280">
    <property type="entry name" value="U5_MeTrfase_fam"/>
</dbReference>
<dbReference type="NCBIfam" id="NF009639">
    <property type="entry name" value="PRK13168.1"/>
    <property type="match status" value="1"/>
</dbReference>
<dbReference type="PANTHER" id="PTHR11061:SF49">
    <property type="entry name" value="23S RRNA (URACIL(1939)-C(5))-METHYLTRANSFERASE RLMD"/>
    <property type="match status" value="1"/>
</dbReference>
<dbReference type="PANTHER" id="PTHR11061">
    <property type="entry name" value="RNA M5U METHYLTRANSFERASE"/>
    <property type="match status" value="1"/>
</dbReference>
<dbReference type="Pfam" id="PF05958">
    <property type="entry name" value="tRNA_U5-meth_tr"/>
    <property type="match status" value="1"/>
</dbReference>
<dbReference type="SUPFAM" id="SSF50249">
    <property type="entry name" value="Nucleic acid-binding proteins"/>
    <property type="match status" value="1"/>
</dbReference>
<dbReference type="SUPFAM" id="SSF53335">
    <property type="entry name" value="S-adenosyl-L-methionine-dependent methyltransferases"/>
    <property type="match status" value="1"/>
</dbReference>
<dbReference type="PROSITE" id="PS51687">
    <property type="entry name" value="SAM_MT_RNA_M5U"/>
    <property type="match status" value="1"/>
</dbReference>
<dbReference type="PROSITE" id="PS50926">
    <property type="entry name" value="TRAM"/>
    <property type="match status" value="1"/>
</dbReference>
<dbReference type="PROSITE" id="PS01231">
    <property type="entry name" value="TRMA_2"/>
    <property type="match status" value="1"/>
</dbReference>
<proteinExistence type="inferred from homology"/>
<gene>
    <name evidence="1" type="primary">rlmD</name>
    <name type="synonym">rumA</name>
    <name type="ordered locus">Reut_A2092</name>
</gene>
<reference key="1">
    <citation type="journal article" date="2010" name="PLoS ONE">
        <title>The complete multipartite genome sequence of Cupriavidus necator JMP134, a versatile pollutant degrader.</title>
        <authorList>
            <person name="Lykidis A."/>
            <person name="Perez-Pantoja D."/>
            <person name="Ledger T."/>
            <person name="Mavromatis K."/>
            <person name="Anderson I.J."/>
            <person name="Ivanova N.N."/>
            <person name="Hooper S.D."/>
            <person name="Lapidus A."/>
            <person name="Lucas S."/>
            <person name="Gonzalez B."/>
            <person name="Kyrpides N.C."/>
        </authorList>
    </citation>
    <scope>NUCLEOTIDE SEQUENCE [LARGE SCALE GENOMIC DNA]</scope>
    <source>
        <strain>JMP134 / LMG 1197</strain>
    </source>
</reference>
<protein>
    <recommendedName>
        <fullName evidence="1">23S rRNA (uracil(1939)-C(5))-methyltransferase RlmD</fullName>
        <ecNumber evidence="1">2.1.1.190</ecNumber>
    </recommendedName>
    <alternativeName>
        <fullName evidence="1">23S rRNA(m5U1939)-methyltransferase</fullName>
    </alternativeName>
</protein>
<evidence type="ECO:0000255" key="1">
    <source>
        <dbReference type="HAMAP-Rule" id="MF_01010"/>
    </source>
</evidence>
<organism>
    <name type="scientific">Cupriavidus pinatubonensis (strain JMP 134 / LMG 1197)</name>
    <name type="common">Cupriavidus necator (strain JMP 134)</name>
    <dbReference type="NCBI Taxonomy" id="264198"/>
    <lineage>
        <taxon>Bacteria</taxon>
        <taxon>Pseudomonadati</taxon>
        <taxon>Pseudomonadota</taxon>
        <taxon>Betaproteobacteria</taxon>
        <taxon>Burkholderiales</taxon>
        <taxon>Burkholderiaceae</taxon>
        <taxon>Cupriavidus</taxon>
    </lineage>
</organism>
<accession>Q46ZH7</accession>
<feature type="chain" id="PRO_0000229880" description="23S rRNA (uracil(1939)-C(5))-methyltransferase RlmD">
    <location>
        <begin position="1"/>
        <end position="463"/>
    </location>
</feature>
<feature type="domain" description="TRAM" evidence="1">
    <location>
        <begin position="14"/>
        <end position="78"/>
    </location>
</feature>
<feature type="active site" description="Nucleophile" evidence="1">
    <location>
        <position position="419"/>
    </location>
</feature>
<feature type="binding site" evidence="1">
    <location>
        <position position="91"/>
    </location>
    <ligand>
        <name>[4Fe-4S] cluster</name>
        <dbReference type="ChEBI" id="CHEBI:49883"/>
    </ligand>
</feature>
<feature type="binding site" evidence="1">
    <location>
        <position position="97"/>
    </location>
    <ligand>
        <name>[4Fe-4S] cluster</name>
        <dbReference type="ChEBI" id="CHEBI:49883"/>
    </ligand>
</feature>
<feature type="binding site" evidence="1">
    <location>
        <position position="100"/>
    </location>
    <ligand>
        <name>[4Fe-4S] cluster</name>
        <dbReference type="ChEBI" id="CHEBI:49883"/>
    </ligand>
</feature>
<feature type="binding site" evidence="1">
    <location>
        <position position="179"/>
    </location>
    <ligand>
        <name>[4Fe-4S] cluster</name>
        <dbReference type="ChEBI" id="CHEBI:49883"/>
    </ligand>
</feature>
<feature type="binding site" evidence="1">
    <location>
        <position position="287"/>
    </location>
    <ligand>
        <name>S-adenosyl-L-methionine</name>
        <dbReference type="ChEBI" id="CHEBI:59789"/>
    </ligand>
</feature>
<feature type="binding site" evidence="1">
    <location>
        <position position="316"/>
    </location>
    <ligand>
        <name>S-adenosyl-L-methionine</name>
        <dbReference type="ChEBI" id="CHEBI:59789"/>
    </ligand>
</feature>
<feature type="binding site" evidence="1">
    <location>
        <position position="321"/>
    </location>
    <ligand>
        <name>S-adenosyl-L-methionine</name>
        <dbReference type="ChEBI" id="CHEBI:59789"/>
    </ligand>
</feature>
<feature type="binding site" evidence="1">
    <location>
        <position position="337"/>
    </location>
    <ligand>
        <name>S-adenosyl-L-methionine</name>
        <dbReference type="ChEBI" id="CHEBI:59789"/>
    </ligand>
</feature>
<feature type="binding site" evidence="1">
    <location>
        <position position="365"/>
    </location>
    <ligand>
        <name>S-adenosyl-L-methionine</name>
        <dbReference type="ChEBI" id="CHEBI:59789"/>
    </ligand>
</feature>
<feature type="binding site" evidence="1">
    <location>
        <position position="386"/>
    </location>
    <ligand>
        <name>S-adenosyl-L-methionine</name>
        <dbReference type="ChEBI" id="CHEBI:59789"/>
    </ligand>
</feature>
<comment type="function">
    <text evidence="1">Catalyzes the formation of 5-methyl-uridine at position 1939 (m5U1939) in 23S rRNA.</text>
</comment>
<comment type="catalytic activity">
    <reaction evidence="1">
        <text>uridine(1939) in 23S rRNA + S-adenosyl-L-methionine = 5-methyluridine(1939) in 23S rRNA + S-adenosyl-L-homocysteine + H(+)</text>
        <dbReference type="Rhea" id="RHEA:42908"/>
        <dbReference type="Rhea" id="RHEA-COMP:10278"/>
        <dbReference type="Rhea" id="RHEA-COMP:10279"/>
        <dbReference type="ChEBI" id="CHEBI:15378"/>
        <dbReference type="ChEBI" id="CHEBI:57856"/>
        <dbReference type="ChEBI" id="CHEBI:59789"/>
        <dbReference type="ChEBI" id="CHEBI:65315"/>
        <dbReference type="ChEBI" id="CHEBI:74447"/>
        <dbReference type="EC" id="2.1.1.190"/>
    </reaction>
</comment>
<comment type="similarity">
    <text evidence="1">Belongs to the class I-like SAM-binding methyltransferase superfamily. RNA M5U methyltransferase family. RlmD subfamily.</text>
</comment>
<sequence>MPAAPRAASASPAAVAPGSDPVVSIDSLDMEARGVGRLVNEDGTPGKVIFVEGALPGETVSYKSFRRKPSYEQAHLLEVRRESVMRVKPGCKHFGVCGGCSMQHLDSRAQLAIKQRVLEDNLWHLSKVRPEVMFRPIAGPDWGYRYRARLTVRYVAKKGGVLVGFHERKSSYVADMTSCEILPPHISAMLVPLRELVTGLSIRDRMPQIELAVGHEVTALVLRILEPLTDADKDLLRAFADQHNVQFWLQPKGPDTVVPFYPLDRELAYTLPEFGIRMPFKPTDFTQVNHHINRVLIGRALRLLDVQPQDRLLDLFCGIGNFTLPLATQGRSVMGIEGSEALTTRALANAGYNGLAEKTEFACRNLFEVTAEDIAALGRFDRWLIDPPREGALAVCKALGELSQQGSDVLPQRIVYVSCSPATLARDAGLLVHEAGYRLAGAGVVNMFPHTSHVESIAVFERR</sequence>